<feature type="chain" id="PRO_0000277688" description="Methionine import ATP-binding protein MetN 2">
    <location>
        <begin position="1"/>
        <end position="354"/>
    </location>
</feature>
<feature type="domain" description="ABC transporter" evidence="1">
    <location>
        <begin position="6"/>
        <end position="250"/>
    </location>
</feature>
<feature type="binding site" evidence="1">
    <location>
        <begin position="42"/>
        <end position="49"/>
    </location>
    <ligand>
        <name>ATP</name>
        <dbReference type="ChEBI" id="CHEBI:30616"/>
    </ligand>
</feature>
<reference key="1">
    <citation type="journal article" date="2006" name="Proc. Natl. Acad. Sci. U.S.A.">
        <title>Comparative genomics of the lactic acid bacteria.</title>
        <authorList>
            <person name="Makarova K.S."/>
            <person name="Slesarev A."/>
            <person name="Wolf Y.I."/>
            <person name="Sorokin A."/>
            <person name="Mirkin B."/>
            <person name="Koonin E.V."/>
            <person name="Pavlov A."/>
            <person name="Pavlova N."/>
            <person name="Karamychev V."/>
            <person name="Polouchine N."/>
            <person name="Shakhova V."/>
            <person name="Grigoriev I."/>
            <person name="Lou Y."/>
            <person name="Rohksar D."/>
            <person name="Lucas S."/>
            <person name="Huang K."/>
            <person name="Goodstein D.M."/>
            <person name="Hawkins T."/>
            <person name="Plengvidhya V."/>
            <person name="Welker D."/>
            <person name="Hughes J."/>
            <person name="Goh Y."/>
            <person name="Benson A."/>
            <person name="Baldwin K."/>
            <person name="Lee J.-H."/>
            <person name="Diaz-Muniz I."/>
            <person name="Dosti B."/>
            <person name="Smeianov V."/>
            <person name="Wechter W."/>
            <person name="Barabote R."/>
            <person name="Lorca G."/>
            <person name="Altermann E."/>
            <person name="Barrangou R."/>
            <person name="Ganesan B."/>
            <person name="Xie Y."/>
            <person name="Rawsthorne H."/>
            <person name="Tamir D."/>
            <person name="Parker C."/>
            <person name="Breidt F."/>
            <person name="Broadbent J.R."/>
            <person name="Hutkins R."/>
            <person name="O'Sullivan D."/>
            <person name="Steele J."/>
            <person name="Unlu G."/>
            <person name="Saier M.H. Jr."/>
            <person name="Klaenhammer T."/>
            <person name="Richardson P."/>
            <person name="Kozyavkin S."/>
            <person name="Weimer B.C."/>
            <person name="Mills D.A."/>
        </authorList>
    </citation>
    <scope>NUCLEOTIDE SEQUENCE [LARGE SCALE GENOMIC DNA]</scope>
    <source>
        <strain>ATCC BAA-331 / PSU-1</strain>
    </source>
</reference>
<keyword id="KW-0029">Amino-acid transport</keyword>
<keyword id="KW-0067">ATP-binding</keyword>
<keyword id="KW-1003">Cell membrane</keyword>
<keyword id="KW-0472">Membrane</keyword>
<keyword id="KW-0547">Nucleotide-binding</keyword>
<keyword id="KW-1185">Reference proteome</keyword>
<keyword id="KW-1278">Translocase</keyword>
<keyword id="KW-0813">Transport</keyword>
<name>METN2_OENOB</name>
<proteinExistence type="inferred from homology"/>
<accession>Q04DA7</accession>
<organism>
    <name type="scientific">Oenococcus oeni (strain ATCC BAA-331 / PSU-1)</name>
    <dbReference type="NCBI Taxonomy" id="203123"/>
    <lineage>
        <taxon>Bacteria</taxon>
        <taxon>Bacillati</taxon>
        <taxon>Bacillota</taxon>
        <taxon>Bacilli</taxon>
        <taxon>Lactobacillales</taxon>
        <taxon>Lactobacillaceae</taxon>
        <taxon>Oenococcus</taxon>
    </lineage>
</organism>
<sequence length="354" mass="38981">MSDSIIELKNISVHFQNGSESIDAVKNINLAIEKGEIFGIVGYSGAGKSSLVRLINLLHHPSSGDMMIGQTKTVKNGNVLIKGKELRNLRQKIGMIFQHFNLLDQSTVLGNVLFALKHSKMSKEKRLEKAKKLVEEVGLFDRIDNHPSQLSGGQKQRVAIARALANDPEILISDEATSALDPKTTKQILELLADLNKRTGLTIVLITHEMQVVKNIANRVAVMRDGEIIEKNSTYSIFADPQKPLTKEFIESASGNQEALEKILRQPEIARLQKNEFLIQLGFSGSSTDEPLISSLAKNYGVSANILYGNVETIENIPIGTLIVVLSGTATKLKQALDEIKKQNVKLEIIKEGK</sequence>
<protein>
    <recommendedName>
        <fullName evidence="1">Methionine import ATP-binding protein MetN 2</fullName>
        <ecNumber evidence="1">7.4.2.11</ecNumber>
    </recommendedName>
</protein>
<gene>
    <name evidence="1" type="primary">metN2</name>
    <name type="ordered locus">OEOE_1720</name>
</gene>
<comment type="function">
    <text evidence="1">Part of the ABC transporter complex MetNIQ involved in methionine import. Responsible for energy coupling to the transport system.</text>
</comment>
<comment type="catalytic activity">
    <reaction evidence="1">
        <text>L-methionine(out) + ATP + H2O = L-methionine(in) + ADP + phosphate + H(+)</text>
        <dbReference type="Rhea" id="RHEA:29779"/>
        <dbReference type="ChEBI" id="CHEBI:15377"/>
        <dbReference type="ChEBI" id="CHEBI:15378"/>
        <dbReference type="ChEBI" id="CHEBI:30616"/>
        <dbReference type="ChEBI" id="CHEBI:43474"/>
        <dbReference type="ChEBI" id="CHEBI:57844"/>
        <dbReference type="ChEBI" id="CHEBI:456216"/>
        <dbReference type="EC" id="7.4.2.11"/>
    </reaction>
</comment>
<comment type="catalytic activity">
    <reaction evidence="1">
        <text>D-methionine(out) + ATP + H2O = D-methionine(in) + ADP + phosphate + H(+)</text>
        <dbReference type="Rhea" id="RHEA:29767"/>
        <dbReference type="ChEBI" id="CHEBI:15377"/>
        <dbReference type="ChEBI" id="CHEBI:15378"/>
        <dbReference type="ChEBI" id="CHEBI:30616"/>
        <dbReference type="ChEBI" id="CHEBI:43474"/>
        <dbReference type="ChEBI" id="CHEBI:57932"/>
        <dbReference type="ChEBI" id="CHEBI:456216"/>
        <dbReference type="EC" id="7.4.2.11"/>
    </reaction>
</comment>
<comment type="subunit">
    <text evidence="1">The complex is composed of two ATP-binding proteins (MetN), two transmembrane proteins (MetI) and a solute-binding protein (MetQ).</text>
</comment>
<comment type="subcellular location">
    <subcellularLocation>
        <location evidence="1">Cell membrane</location>
        <topology evidence="1">Peripheral membrane protein</topology>
    </subcellularLocation>
</comment>
<comment type="similarity">
    <text evidence="1">Belongs to the ABC transporter superfamily. Methionine importer (TC 3.A.1.24) family.</text>
</comment>
<dbReference type="EC" id="7.4.2.11" evidence="1"/>
<dbReference type="EMBL" id="CP000411">
    <property type="protein sequence ID" value="ABJ57565.1"/>
    <property type="molecule type" value="Genomic_DNA"/>
</dbReference>
<dbReference type="RefSeq" id="WP_002821301.1">
    <property type="nucleotide sequence ID" value="NC_008528.1"/>
</dbReference>
<dbReference type="SMR" id="Q04DA7"/>
<dbReference type="STRING" id="203123.OEOE_1720"/>
<dbReference type="KEGG" id="ooe:OEOE_1720"/>
<dbReference type="PATRIC" id="fig|203123.7.peg.1756"/>
<dbReference type="eggNOG" id="COG1135">
    <property type="taxonomic scope" value="Bacteria"/>
</dbReference>
<dbReference type="HOGENOM" id="CLU_000604_1_3_9"/>
<dbReference type="Proteomes" id="UP000000774">
    <property type="component" value="Chromosome"/>
</dbReference>
<dbReference type="GO" id="GO:0005886">
    <property type="term" value="C:plasma membrane"/>
    <property type="evidence" value="ECO:0007669"/>
    <property type="project" value="UniProtKB-SubCell"/>
</dbReference>
<dbReference type="GO" id="GO:0033232">
    <property type="term" value="F:ABC-type D-methionine transporter activity"/>
    <property type="evidence" value="ECO:0007669"/>
    <property type="project" value="UniProtKB-EC"/>
</dbReference>
<dbReference type="GO" id="GO:0005524">
    <property type="term" value="F:ATP binding"/>
    <property type="evidence" value="ECO:0007669"/>
    <property type="project" value="UniProtKB-KW"/>
</dbReference>
<dbReference type="GO" id="GO:0016887">
    <property type="term" value="F:ATP hydrolysis activity"/>
    <property type="evidence" value="ECO:0007669"/>
    <property type="project" value="InterPro"/>
</dbReference>
<dbReference type="Gene3D" id="3.30.70.260">
    <property type="match status" value="1"/>
</dbReference>
<dbReference type="Gene3D" id="3.40.50.300">
    <property type="entry name" value="P-loop containing nucleotide triphosphate hydrolases"/>
    <property type="match status" value="1"/>
</dbReference>
<dbReference type="InterPro" id="IPR003593">
    <property type="entry name" value="AAA+_ATPase"/>
</dbReference>
<dbReference type="InterPro" id="IPR003439">
    <property type="entry name" value="ABC_transporter-like_ATP-bd"/>
</dbReference>
<dbReference type="InterPro" id="IPR017871">
    <property type="entry name" value="ABC_transporter-like_CS"/>
</dbReference>
<dbReference type="InterPro" id="IPR045865">
    <property type="entry name" value="ACT-like_dom_sf"/>
</dbReference>
<dbReference type="InterPro" id="IPR050086">
    <property type="entry name" value="MetN_ABC_transporter-like"/>
</dbReference>
<dbReference type="InterPro" id="IPR018449">
    <property type="entry name" value="NIL_domain"/>
</dbReference>
<dbReference type="InterPro" id="IPR027417">
    <property type="entry name" value="P-loop_NTPase"/>
</dbReference>
<dbReference type="PANTHER" id="PTHR43166">
    <property type="entry name" value="AMINO ACID IMPORT ATP-BINDING PROTEIN"/>
    <property type="match status" value="1"/>
</dbReference>
<dbReference type="PANTHER" id="PTHR43166:SF30">
    <property type="entry name" value="METHIONINE IMPORT ATP-BINDING PROTEIN METN"/>
    <property type="match status" value="1"/>
</dbReference>
<dbReference type="Pfam" id="PF00005">
    <property type="entry name" value="ABC_tran"/>
    <property type="match status" value="1"/>
</dbReference>
<dbReference type="Pfam" id="PF09383">
    <property type="entry name" value="NIL"/>
    <property type="match status" value="1"/>
</dbReference>
<dbReference type="SMART" id="SM00382">
    <property type="entry name" value="AAA"/>
    <property type="match status" value="1"/>
</dbReference>
<dbReference type="SMART" id="SM00930">
    <property type="entry name" value="NIL"/>
    <property type="match status" value="1"/>
</dbReference>
<dbReference type="SUPFAM" id="SSF55021">
    <property type="entry name" value="ACT-like"/>
    <property type="match status" value="1"/>
</dbReference>
<dbReference type="SUPFAM" id="SSF52540">
    <property type="entry name" value="P-loop containing nucleoside triphosphate hydrolases"/>
    <property type="match status" value="1"/>
</dbReference>
<dbReference type="PROSITE" id="PS00211">
    <property type="entry name" value="ABC_TRANSPORTER_1"/>
    <property type="match status" value="1"/>
</dbReference>
<dbReference type="PROSITE" id="PS50893">
    <property type="entry name" value="ABC_TRANSPORTER_2"/>
    <property type="match status" value="1"/>
</dbReference>
<dbReference type="PROSITE" id="PS51264">
    <property type="entry name" value="METN"/>
    <property type="match status" value="1"/>
</dbReference>
<evidence type="ECO:0000255" key="1">
    <source>
        <dbReference type="HAMAP-Rule" id="MF_01719"/>
    </source>
</evidence>